<evidence type="ECO:0000255" key="1">
    <source>
        <dbReference type="HAMAP-Rule" id="MF_01224"/>
    </source>
</evidence>
<accession>A6Q6C1</accession>
<gene>
    <name evidence="1" type="primary">moaC</name>
    <name type="ordered locus">SUN_0070</name>
</gene>
<organism>
    <name type="scientific">Sulfurovum sp. (strain NBC37-1)</name>
    <dbReference type="NCBI Taxonomy" id="387093"/>
    <lineage>
        <taxon>Bacteria</taxon>
        <taxon>Pseudomonadati</taxon>
        <taxon>Campylobacterota</taxon>
        <taxon>Epsilonproteobacteria</taxon>
        <taxon>Campylobacterales</taxon>
        <taxon>Sulfurovaceae</taxon>
        <taxon>Sulfurovum</taxon>
    </lineage>
</organism>
<sequence>MNLTHLDEQNKPKMVDVSDKDNTTRIATASGIIEVGQAAFDAVIANTAKKGPVLQTAVIAAIQGTKQTSTLIPMCHPLMLTSVKTDIEELPELPGFKLTVTAKLTGQTGVEMEALTGVSVGLLTIYDMLKAIDKGMVIRNVQLEHKSGGNSGDFNRA</sequence>
<protein>
    <recommendedName>
        <fullName evidence="1">Cyclic pyranopterin monophosphate synthase</fullName>
        <ecNumber evidence="1">4.6.1.17</ecNumber>
    </recommendedName>
    <alternativeName>
        <fullName evidence="1">Molybdenum cofactor biosynthesis protein C</fullName>
    </alternativeName>
</protein>
<dbReference type="EC" id="4.6.1.17" evidence="1"/>
<dbReference type="EMBL" id="AP009179">
    <property type="protein sequence ID" value="BAF71030.1"/>
    <property type="molecule type" value="Genomic_DNA"/>
</dbReference>
<dbReference type="RefSeq" id="WP_011979763.1">
    <property type="nucleotide sequence ID" value="NC_009663.1"/>
</dbReference>
<dbReference type="SMR" id="A6Q6C1"/>
<dbReference type="STRING" id="387093.SUN_0070"/>
<dbReference type="KEGG" id="sun:SUN_0070"/>
<dbReference type="eggNOG" id="COG0315">
    <property type="taxonomic scope" value="Bacteria"/>
</dbReference>
<dbReference type="HOGENOM" id="CLU_074693_1_1_7"/>
<dbReference type="OrthoDB" id="9794429at2"/>
<dbReference type="UniPathway" id="UPA00344"/>
<dbReference type="Proteomes" id="UP000006378">
    <property type="component" value="Chromosome"/>
</dbReference>
<dbReference type="GO" id="GO:0061799">
    <property type="term" value="F:cyclic pyranopterin monophosphate synthase activity"/>
    <property type="evidence" value="ECO:0007669"/>
    <property type="project" value="UniProtKB-UniRule"/>
</dbReference>
<dbReference type="GO" id="GO:0006777">
    <property type="term" value="P:Mo-molybdopterin cofactor biosynthetic process"/>
    <property type="evidence" value="ECO:0007669"/>
    <property type="project" value="UniProtKB-UniRule"/>
</dbReference>
<dbReference type="CDD" id="cd01420">
    <property type="entry name" value="MoaC_PE"/>
    <property type="match status" value="1"/>
</dbReference>
<dbReference type="Gene3D" id="3.30.70.640">
    <property type="entry name" value="Molybdopterin cofactor biosynthesis C (MoaC) domain"/>
    <property type="match status" value="1"/>
</dbReference>
<dbReference type="HAMAP" id="MF_01224_B">
    <property type="entry name" value="MoaC_B"/>
    <property type="match status" value="1"/>
</dbReference>
<dbReference type="InterPro" id="IPR023045">
    <property type="entry name" value="MoaC"/>
</dbReference>
<dbReference type="InterPro" id="IPR047594">
    <property type="entry name" value="MoaC_bact/euk"/>
</dbReference>
<dbReference type="InterPro" id="IPR036522">
    <property type="entry name" value="MoaC_sf"/>
</dbReference>
<dbReference type="InterPro" id="IPR002820">
    <property type="entry name" value="Mopterin_CF_biosynth-C_dom"/>
</dbReference>
<dbReference type="NCBIfam" id="TIGR00581">
    <property type="entry name" value="moaC"/>
    <property type="match status" value="1"/>
</dbReference>
<dbReference type="NCBIfam" id="NF006870">
    <property type="entry name" value="PRK09364.1"/>
    <property type="match status" value="1"/>
</dbReference>
<dbReference type="Pfam" id="PF01967">
    <property type="entry name" value="MoaC"/>
    <property type="match status" value="1"/>
</dbReference>
<dbReference type="SUPFAM" id="SSF55040">
    <property type="entry name" value="Molybdenum cofactor biosynthesis protein C, MoaC"/>
    <property type="match status" value="1"/>
</dbReference>
<feature type="chain" id="PRO_1000054154" description="Cyclic pyranopterin monophosphate synthase">
    <location>
        <begin position="1"/>
        <end position="157"/>
    </location>
</feature>
<feature type="active site" evidence="1">
    <location>
        <position position="127"/>
    </location>
</feature>
<feature type="binding site" evidence="1">
    <location>
        <begin position="74"/>
        <end position="76"/>
    </location>
    <ligand>
        <name>substrate</name>
    </ligand>
</feature>
<feature type="binding site" evidence="1">
    <location>
        <begin position="112"/>
        <end position="113"/>
    </location>
    <ligand>
        <name>substrate</name>
    </ligand>
</feature>
<reference key="1">
    <citation type="journal article" date="2007" name="Proc. Natl. Acad. Sci. U.S.A.">
        <title>Deep-sea vent epsilon-proteobacterial genomes provide insights into emergence of pathogens.</title>
        <authorList>
            <person name="Nakagawa S."/>
            <person name="Takaki Y."/>
            <person name="Shimamura S."/>
            <person name="Reysenbach A.-L."/>
            <person name="Takai K."/>
            <person name="Horikoshi K."/>
        </authorList>
    </citation>
    <scope>NUCLEOTIDE SEQUENCE [LARGE SCALE GENOMIC DNA]</scope>
    <source>
        <strain>NBC37-1</strain>
    </source>
</reference>
<comment type="function">
    <text evidence="1">Catalyzes the conversion of (8S)-3',8-cyclo-7,8-dihydroguanosine 5'-triphosphate to cyclic pyranopterin monophosphate (cPMP).</text>
</comment>
<comment type="catalytic activity">
    <reaction evidence="1">
        <text>(8S)-3',8-cyclo-7,8-dihydroguanosine 5'-triphosphate = cyclic pyranopterin phosphate + diphosphate</text>
        <dbReference type="Rhea" id="RHEA:49580"/>
        <dbReference type="ChEBI" id="CHEBI:33019"/>
        <dbReference type="ChEBI" id="CHEBI:59648"/>
        <dbReference type="ChEBI" id="CHEBI:131766"/>
        <dbReference type="EC" id="4.6.1.17"/>
    </reaction>
</comment>
<comment type="pathway">
    <text evidence="1">Cofactor biosynthesis; molybdopterin biosynthesis.</text>
</comment>
<comment type="subunit">
    <text evidence="1">Homohexamer; trimer of dimers.</text>
</comment>
<comment type="similarity">
    <text evidence="1">Belongs to the MoaC family.</text>
</comment>
<keyword id="KW-0456">Lyase</keyword>
<keyword id="KW-0501">Molybdenum cofactor biosynthesis</keyword>
<proteinExistence type="inferred from homology"/>
<name>MOAC_SULNB</name>